<protein>
    <recommendedName>
        <fullName evidence="6">Endothelin-1 receptor</fullName>
    </recommendedName>
    <alternativeName>
        <fullName evidence="2">Endothelin receptor type A</fullName>
        <shortName>ET-A</shortName>
        <shortName>ET-AR</shortName>
    </alternativeName>
</protein>
<reference key="1">
    <citation type="journal article" date="1995" name="Br. J. Pharmacol.">
        <title>Evidence for the presence of endothelin ETA receptors in endothelial cells in situ on the aortic side of porcine aortic valve.</title>
        <authorList>
            <person name="Nishimura J."/>
            <person name="Aoki H."/>
            <person name="Chen X."/>
            <person name="Shikasho T."/>
            <person name="Kobayashi S."/>
            <person name="Kanaide H."/>
        </authorList>
    </citation>
    <scope>NUCLEOTIDE SEQUENCE [MRNA]</scope>
    <source>
        <tissue>Lung</tissue>
    </source>
</reference>
<keyword id="KW-1003">Cell membrane</keyword>
<keyword id="KW-1015">Disulfide bond</keyword>
<keyword id="KW-0297">G-protein coupled receptor</keyword>
<keyword id="KW-0325">Glycoprotein</keyword>
<keyword id="KW-0472">Membrane</keyword>
<keyword id="KW-0597">Phosphoprotein</keyword>
<keyword id="KW-0675">Receptor</keyword>
<keyword id="KW-1185">Reference proteome</keyword>
<keyword id="KW-0732">Signal</keyword>
<keyword id="KW-0807">Transducer</keyword>
<keyword id="KW-0812">Transmembrane</keyword>
<keyword id="KW-1133">Transmembrane helix</keyword>
<proteinExistence type="evidence at transcript level"/>
<gene>
    <name evidence="2" type="primary">EDNRA</name>
</gene>
<comment type="function">
    <text evidence="1">Receptor for endothelin-1. Mediates its action by association with G proteins that activate a phosphatidylinositol-calcium second messenger system. The rank order of binding affinities for ET-A is: ET1 &gt; ET2 &gt;&gt; ET3 (By similarity).</text>
</comment>
<comment type="subunit">
    <text evidence="1">Interacts with HDAC7 and KAT5.</text>
</comment>
<comment type="subcellular location">
    <subcellularLocation>
        <location>Cell membrane</location>
        <topology>Multi-pass membrane protein</topology>
    </subcellularLocation>
</comment>
<comment type="similarity">
    <text evidence="5">Belongs to the G-protein coupled receptor 1 family. Endothelin receptor subfamily. EDNRA sub-subfamily.</text>
</comment>
<name>EDNRA_PIG</name>
<dbReference type="EMBL" id="S80652">
    <property type="protein sequence ID" value="AAB36014.1"/>
    <property type="molecule type" value="mRNA"/>
</dbReference>
<dbReference type="RefSeq" id="NP_999394.1">
    <property type="nucleotide sequence ID" value="NM_214229.1"/>
</dbReference>
<dbReference type="SMR" id="Q29010"/>
<dbReference type="FunCoup" id="Q29010">
    <property type="interactions" value="244"/>
</dbReference>
<dbReference type="STRING" id="9823.ENSSSCP00000009635"/>
<dbReference type="BindingDB" id="Q29010"/>
<dbReference type="ChEMBL" id="CHEMBL4130"/>
<dbReference type="DrugCentral" id="Q29010"/>
<dbReference type="GlyCosmos" id="Q29010">
    <property type="glycosylation" value="2 sites, No reported glycans"/>
</dbReference>
<dbReference type="GlyGen" id="Q29010">
    <property type="glycosylation" value="2 sites"/>
</dbReference>
<dbReference type="PaxDb" id="9823-ENSSSCP00000009635"/>
<dbReference type="Ensembl" id="ENSSSCT00015061597.1">
    <property type="protein sequence ID" value="ENSSSCP00015024741.1"/>
    <property type="gene ID" value="ENSSSCG00015045817.1"/>
</dbReference>
<dbReference type="Ensembl" id="ENSSSCT00030023764.1">
    <property type="protein sequence ID" value="ENSSSCP00030010662.1"/>
    <property type="gene ID" value="ENSSSCG00030017166.1"/>
</dbReference>
<dbReference type="Ensembl" id="ENSSSCT00040105368.1">
    <property type="protein sequence ID" value="ENSSSCP00040048224.1"/>
    <property type="gene ID" value="ENSSSCG00040075833.1"/>
</dbReference>
<dbReference type="Ensembl" id="ENSSSCT00045038265.1">
    <property type="protein sequence ID" value="ENSSSCP00045026586.1"/>
    <property type="gene ID" value="ENSSSCG00045022387.1"/>
</dbReference>
<dbReference type="Ensembl" id="ENSSSCT00050036077.1">
    <property type="protein sequence ID" value="ENSSSCP00050014996.1"/>
    <property type="gene ID" value="ENSSSCG00050026780.1"/>
</dbReference>
<dbReference type="Ensembl" id="ENSSSCT00055042022.1">
    <property type="protein sequence ID" value="ENSSSCP00055033461.1"/>
    <property type="gene ID" value="ENSSSCG00055021336.1"/>
</dbReference>
<dbReference type="Ensembl" id="ENSSSCT00060002446.1">
    <property type="protein sequence ID" value="ENSSSCP00060000769.1"/>
    <property type="gene ID" value="ENSSSCG00060002008.1"/>
</dbReference>
<dbReference type="Ensembl" id="ENSSSCT00065017565.1">
    <property type="protein sequence ID" value="ENSSSCP00065007180.1"/>
    <property type="gene ID" value="ENSSSCG00065013180.1"/>
</dbReference>
<dbReference type="Ensembl" id="ENSSSCT00085012766">
    <property type="protein sequence ID" value="ENSSSCP00085009321"/>
    <property type="gene ID" value="ENSSSCG00085006707"/>
</dbReference>
<dbReference type="Ensembl" id="ENSSSCT00090017450">
    <property type="protein sequence ID" value="ENSSSCP00090011100"/>
    <property type="gene ID" value="ENSSSCG00090009724"/>
</dbReference>
<dbReference type="Ensembl" id="ENSSSCT00115028348">
    <property type="protein sequence ID" value="ENSSSCP00115026884"/>
    <property type="gene ID" value="ENSSSCG00115016212"/>
</dbReference>
<dbReference type="Ensembl" id="ENSSSCT00130029174">
    <property type="protein sequence ID" value="ENSSSCP00130019977"/>
    <property type="gene ID" value="ENSSSCG00130014721"/>
</dbReference>
<dbReference type="GeneID" id="397457"/>
<dbReference type="KEGG" id="ssc:397457"/>
<dbReference type="CTD" id="1909"/>
<dbReference type="eggNOG" id="KOG3656">
    <property type="taxonomic scope" value="Eukaryota"/>
</dbReference>
<dbReference type="InParanoid" id="Q29010"/>
<dbReference type="OrthoDB" id="10049706at2759"/>
<dbReference type="PRO" id="PR:Q29010"/>
<dbReference type="Proteomes" id="UP000008227">
    <property type="component" value="Unplaced"/>
</dbReference>
<dbReference type="Proteomes" id="UP000314985">
    <property type="component" value="Unplaced"/>
</dbReference>
<dbReference type="Proteomes" id="UP000694570">
    <property type="component" value="Unplaced"/>
</dbReference>
<dbReference type="Proteomes" id="UP000694571">
    <property type="component" value="Unplaced"/>
</dbReference>
<dbReference type="Proteomes" id="UP000694720">
    <property type="component" value="Unplaced"/>
</dbReference>
<dbReference type="Proteomes" id="UP000694722">
    <property type="component" value="Unplaced"/>
</dbReference>
<dbReference type="Proteomes" id="UP000694723">
    <property type="component" value="Unplaced"/>
</dbReference>
<dbReference type="Proteomes" id="UP000694724">
    <property type="component" value="Unplaced"/>
</dbReference>
<dbReference type="Proteomes" id="UP000694725">
    <property type="component" value="Unplaced"/>
</dbReference>
<dbReference type="Proteomes" id="UP000694726">
    <property type="component" value="Unplaced"/>
</dbReference>
<dbReference type="Proteomes" id="UP000694727">
    <property type="component" value="Unplaced"/>
</dbReference>
<dbReference type="Proteomes" id="UP000694728">
    <property type="component" value="Unplaced"/>
</dbReference>
<dbReference type="GO" id="GO:0005886">
    <property type="term" value="C:plasma membrane"/>
    <property type="evidence" value="ECO:0000318"/>
    <property type="project" value="GO_Central"/>
</dbReference>
<dbReference type="GO" id="GO:0004962">
    <property type="term" value="F:endothelin receptor activity"/>
    <property type="evidence" value="ECO:0000318"/>
    <property type="project" value="GO_Central"/>
</dbReference>
<dbReference type="GO" id="GO:0048066">
    <property type="term" value="P:developmental pigmentation"/>
    <property type="evidence" value="ECO:0000318"/>
    <property type="project" value="GO_Central"/>
</dbReference>
<dbReference type="GO" id="GO:0086100">
    <property type="term" value="P:endothelin receptor signaling pathway"/>
    <property type="evidence" value="ECO:0000318"/>
    <property type="project" value="GO_Central"/>
</dbReference>
<dbReference type="GO" id="GO:0048484">
    <property type="term" value="P:enteric nervous system development"/>
    <property type="evidence" value="ECO:0007669"/>
    <property type="project" value="InterPro"/>
</dbReference>
<dbReference type="GO" id="GO:0008217">
    <property type="term" value="P:regulation of blood pressure"/>
    <property type="evidence" value="ECO:0007669"/>
    <property type="project" value="InterPro"/>
</dbReference>
<dbReference type="GO" id="GO:0042310">
    <property type="term" value="P:vasoconstriction"/>
    <property type="evidence" value="ECO:0000318"/>
    <property type="project" value="GO_Central"/>
</dbReference>
<dbReference type="CDD" id="cd15975">
    <property type="entry name" value="7tmA_ET-AR"/>
    <property type="match status" value="1"/>
</dbReference>
<dbReference type="FunFam" id="1.20.1070.10:FF:000076">
    <property type="entry name" value="Endothelin receptor type B"/>
    <property type="match status" value="1"/>
</dbReference>
<dbReference type="Gene3D" id="1.20.1070.10">
    <property type="entry name" value="Rhodopsin 7-helix transmembrane proteins"/>
    <property type="match status" value="1"/>
</dbReference>
<dbReference type="InterPro" id="IPR000499">
    <property type="entry name" value="Endthln_rcpt"/>
</dbReference>
<dbReference type="InterPro" id="IPR002175">
    <property type="entry name" value="ETA_rcpt"/>
</dbReference>
<dbReference type="InterPro" id="IPR051193">
    <property type="entry name" value="GPCR_endothelin_rcpt"/>
</dbReference>
<dbReference type="InterPro" id="IPR000276">
    <property type="entry name" value="GPCR_Rhodpsn"/>
</dbReference>
<dbReference type="InterPro" id="IPR017452">
    <property type="entry name" value="GPCR_Rhodpsn_7TM"/>
</dbReference>
<dbReference type="PANTHER" id="PTHR46099:SF2">
    <property type="entry name" value="ENDOTHELIN-1 RECEPTOR"/>
    <property type="match status" value="1"/>
</dbReference>
<dbReference type="PANTHER" id="PTHR46099">
    <property type="entry name" value="G_PROTEIN_RECEP_F1_2 DOMAIN-CONTAINING PROTEIN"/>
    <property type="match status" value="1"/>
</dbReference>
<dbReference type="Pfam" id="PF00001">
    <property type="entry name" value="7tm_1"/>
    <property type="match status" value="1"/>
</dbReference>
<dbReference type="PRINTS" id="PR00570">
    <property type="entry name" value="ENDOTHELINAR"/>
</dbReference>
<dbReference type="PRINTS" id="PR00366">
    <property type="entry name" value="ENDOTHELINR"/>
</dbReference>
<dbReference type="PRINTS" id="PR00237">
    <property type="entry name" value="GPCRRHODOPSN"/>
</dbReference>
<dbReference type="SUPFAM" id="SSF81321">
    <property type="entry name" value="Family A G protein-coupled receptor-like"/>
    <property type="match status" value="1"/>
</dbReference>
<dbReference type="PROSITE" id="PS00237">
    <property type="entry name" value="G_PROTEIN_RECEP_F1_1"/>
    <property type="match status" value="1"/>
</dbReference>
<dbReference type="PROSITE" id="PS50262">
    <property type="entry name" value="G_PROTEIN_RECEP_F1_2"/>
    <property type="match status" value="1"/>
</dbReference>
<sequence length="427" mass="48694">METFCFRVSFWVALLGCVISDNPESHSTNLSTHVDDFTTFRGTEFSLVVTTHRPTNLALPSNGSMHNYCPQQTKITSAFKYINTVISCTIFIVGMVGNATLLRIIYQNKCMRNGPNALIASLALGDLIYVVIDLPINVFKLLAGRWPFENHDFGVFLCKLFPFLQKSSVGITVLNLCALSVDRYRAVASWSRVQGIGIPLVTAIEIVSIWILSFILAIPEAIGFVMVPFEYKGEEHKTCMLNATSKFMEFYQDVKDWWLFGFYFCMPLVCTAIFYTLMTCEMLNRRNGSLRIALSEHLKQRREVAKTVFCLVVIFALCWFPLHLSRILKKTVYDEMDKNRCELLSFLLLMDYIGINLATMNSCINPIALYFVSKKFKNCFQSCLCCCCYQSKSLMTSVPMNGTSIQWKNHEQNNHNTERSSHKDSIN</sequence>
<feature type="signal peptide" evidence="4">
    <location>
        <begin position="1"/>
        <end position="20"/>
    </location>
</feature>
<feature type="chain" id="PRO_0000012723" description="Endothelin-1 receptor">
    <location>
        <begin position="21"/>
        <end position="427"/>
    </location>
</feature>
<feature type="topological domain" description="Extracellular" evidence="4">
    <location>
        <begin position="21"/>
        <end position="80"/>
    </location>
</feature>
<feature type="transmembrane region" description="Helical; Name=1" evidence="4">
    <location>
        <begin position="81"/>
        <end position="102"/>
    </location>
</feature>
<feature type="topological domain" description="Cytoplasmic" evidence="4">
    <location>
        <begin position="103"/>
        <end position="112"/>
    </location>
</feature>
<feature type="transmembrane region" description="Helical; Name=2" evidence="4">
    <location>
        <begin position="113"/>
        <end position="132"/>
    </location>
</feature>
<feature type="topological domain" description="Extracellular" evidence="4">
    <location>
        <begin position="133"/>
        <end position="159"/>
    </location>
</feature>
<feature type="transmembrane region" description="Helical; Name=3" evidence="4">
    <location>
        <begin position="160"/>
        <end position="181"/>
    </location>
</feature>
<feature type="topological domain" description="Cytoplasmic" evidence="4">
    <location>
        <begin position="182"/>
        <end position="205"/>
    </location>
</feature>
<feature type="transmembrane region" description="Helical; Name=4" evidence="4">
    <location>
        <begin position="206"/>
        <end position="229"/>
    </location>
</feature>
<feature type="topological domain" description="Extracellular" evidence="4">
    <location>
        <begin position="230"/>
        <end position="256"/>
    </location>
</feature>
<feature type="transmembrane region" description="Helical; Name=5" evidence="4">
    <location>
        <begin position="257"/>
        <end position="278"/>
    </location>
</feature>
<feature type="topological domain" description="Cytoplasmic" evidence="4">
    <location>
        <begin position="279"/>
        <end position="306"/>
    </location>
</feature>
<feature type="transmembrane region" description="Helical; Name=6" evidence="4">
    <location>
        <begin position="307"/>
        <end position="328"/>
    </location>
</feature>
<feature type="topological domain" description="Extracellular" evidence="4">
    <location>
        <begin position="329"/>
        <end position="347"/>
    </location>
</feature>
<feature type="transmembrane region" description="Helical; Name=7" evidence="4">
    <location>
        <begin position="348"/>
        <end position="372"/>
    </location>
</feature>
<feature type="topological domain" description="Cytoplasmic" evidence="4">
    <location>
        <begin position="373"/>
        <end position="427"/>
    </location>
</feature>
<feature type="modified residue" description="Phosphoserine" evidence="3">
    <location>
        <position position="425"/>
    </location>
</feature>
<feature type="glycosylation site" description="N-linked (GlcNAc...) asparagine" evidence="4">
    <location>
        <position position="29"/>
    </location>
</feature>
<feature type="glycosylation site" description="N-linked (GlcNAc...) asparagine" evidence="4">
    <location>
        <position position="62"/>
    </location>
</feature>
<feature type="disulfide bond" evidence="5">
    <location>
        <begin position="158"/>
        <end position="239"/>
    </location>
</feature>
<organism>
    <name type="scientific">Sus scrofa</name>
    <name type="common">Pig</name>
    <dbReference type="NCBI Taxonomy" id="9823"/>
    <lineage>
        <taxon>Eukaryota</taxon>
        <taxon>Metazoa</taxon>
        <taxon>Chordata</taxon>
        <taxon>Craniata</taxon>
        <taxon>Vertebrata</taxon>
        <taxon>Euteleostomi</taxon>
        <taxon>Mammalia</taxon>
        <taxon>Eutheria</taxon>
        <taxon>Laurasiatheria</taxon>
        <taxon>Artiodactyla</taxon>
        <taxon>Suina</taxon>
        <taxon>Suidae</taxon>
        <taxon>Sus</taxon>
    </lineage>
</organism>
<evidence type="ECO:0000250" key="1"/>
<evidence type="ECO:0000250" key="2">
    <source>
        <dbReference type="UniProtKB" id="P25101"/>
    </source>
</evidence>
<evidence type="ECO:0000250" key="3">
    <source>
        <dbReference type="UniProtKB" id="P28088"/>
    </source>
</evidence>
<evidence type="ECO:0000255" key="4"/>
<evidence type="ECO:0000255" key="5">
    <source>
        <dbReference type="PROSITE-ProRule" id="PRU00521"/>
    </source>
</evidence>
<evidence type="ECO:0000305" key="6"/>
<accession>Q29010</accession>